<keyword id="KW-0903">Direct protein sequencing</keyword>
<keyword id="KW-0255">Endonuclease</keyword>
<keyword id="KW-0378">Hydrolase</keyword>
<keyword id="KW-0540">Nuclease</keyword>
<keyword id="KW-0964">Secreted</keyword>
<name>RN_HEYCO</name>
<feature type="chain" id="PRO_0000137366" description="Ribonuclease">
    <location>
        <begin position="1"/>
        <end position="109"/>
    </location>
</feature>
<feature type="active site" description="Proton acceptor" evidence="1">
    <location>
        <position position="72"/>
    </location>
</feature>
<feature type="active site" description="Proton donor" evidence="1">
    <location>
        <position position="101"/>
    </location>
</feature>
<protein>
    <recommendedName>
        <fullName>Ribonuclease</fullName>
        <ecNumber>3.1.27.-</ecNumber>
    </recommendedName>
    <alternativeName>
        <fullName>RNase Bco</fullName>
    </alternativeName>
</protein>
<accession>P37203</accession>
<comment type="function">
    <text>Hydrolyzes phosphodiester bonds in RNA, poly- and oligoribonucleotides resulting in 3'-nucleoside monophosphates via 2',3'-cyclophosphate intermediates.</text>
</comment>
<comment type="subcellular location">
    <subcellularLocation>
        <location>Secreted</location>
    </subcellularLocation>
</comment>
<comment type="similarity">
    <text evidence="2">Belongs to the ribonuclease N1/T1 family.</text>
</comment>
<sequence>AVINTFDGVADYLIRYKRLPDNYITKSQASALGWVASKGNLAEVAPGKSIGGDVFSNREGRLPSASGRTWREADINYVSGFRNADRLVYSSDWLIYKTTDHYATFARIR</sequence>
<dbReference type="EC" id="3.1.27.-"/>
<dbReference type="SMR" id="P37203"/>
<dbReference type="GO" id="GO:0005576">
    <property type="term" value="C:extracellular region"/>
    <property type="evidence" value="ECO:0007669"/>
    <property type="project" value="UniProtKB-SubCell"/>
</dbReference>
<dbReference type="GO" id="GO:0003723">
    <property type="term" value="F:RNA binding"/>
    <property type="evidence" value="ECO:0007669"/>
    <property type="project" value="InterPro"/>
</dbReference>
<dbReference type="GO" id="GO:0004521">
    <property type="term" value="F:RNA endonuclease activity"/>
    <property type="evidence" value="ECO:0007669"/>
    <property type="project" value="InterPro"/>
</dbReference>
<dbReference type="CDD" id="cd00933">
    <property type="entry name" value="barnase"/>
    <property type="match status" value="1"/>
</dbReference>
<dbReference type="Gene3D" id="3.10.450.30">
    <property type="entry name" value="Microbial ribonucleases"/>
    <property type="match status" value="1"/>
</dbReference>
<dbReference type="InterPro" id="IPR001887">
    <property type="entry name" value="Barnase"/>
</dbReference>
<dbReference type="InterPro" id="IPR000026">
    <property type="entry name" value="N1-like"/>
</dbReference>
<dbReference type="InterPro" id="IPR016191">
    <property type="entry name" value="Ribonuclease/ribotoxin"/>
</dbReference>
<dbReference type="Pfam" id="PF00545">
    <property type="entry name" value="Ribonuclease"/>
    <property type="match status" value="1"/>
</dbReference>
<dbReference type="PIRSF" id="PIRSF001013">
    <property type="entry name" value="Barnase"/>
    <property type="match status" value="1"/>
</dbReference>
<dbReference type="PRINTS" id="PR00117">
    <property type="entry name" value="BARNASE"/>
</dbReference>
<dbReference type="SUPFAM" id="SSF53933">
    <property type="entry name" value="Microbial ribonucleases"/>
    <property type="match status" value="1"/>
</dbReference>
<organism>
    <name type="scientific">Heyndrickxia coagulans</name>
    <name type="common">Weizmannia coagulans</name>
    <dbReference type="NCBI Taxonomy" id="1398"/>
    <lineage>
        <taxon>Bacteria</taxon>
        <taxon>Bacillati</taxon>
        <taxon>Bacillota</taxon>
        <taxon>Bacilli</taxon>
        <taxon>Bacillales</taxon>
        <taxon>Bacillaceae</taxon>
        <taxon>Heyndrickxia</taxon>
    </lineage>
</organism>
<proteinExistence type="evidence at protein level"/>
<reference key="1">
    <citation type="journal article" date="1993" name="Dokl. Akad. Nauk">
        <title>Amino acid sequence and catalytic properties of the Bacillus coagulans extracellular ribonuclease.</title>
        <authorList>
            <person name="Shlyapnikov S.V."/>
            <person name="Dementiev A.A."/>
        </authorList>
    </citation>
    <scope>PROTEIN SEQUENCE</scope>
</reference>
<evidence type="ECO:0000250" key="1"/>
<evidence type="ECO:0000305" key="2"/>